<organism>
    <name type="scientific">Pseudoalteromonas atlantica (strain T6c / ATCC BAA-1087)</name>
    <dbReference type="NCBI Taxonomy" id="3042615"/>
    <lineage>
        <taxon>Bacteria</taxon>
        <taxon>Pseudomonadati</taxon>
        <taxon>Pseudomonadota</taxon>
        <taxon>Gammaproteobacteria</taxon>
        <taxon>Alteromonadales</taxon>
        <taxon>Alteromonadaceae</taxon>
        <taxon>Paraglaciecola</taxon>
    </lineage>
</organism>
<reference key="1">
    <citation type="submission" date="2006-06" db="EMBL/GenBank/DDBJ databases">
        <title>Complete sequence of Pseudoalteromonas atlantica T6c.</title>
        <authorList>
            <consortium name="US DOE Joint Genome Institute"/>
            <person name="Copeland A."/>
            <person name="Lucas S."/>
            <person name="Lapidus A."/>
            <person name="Barry K."/>
            <person name="Detter J.C."/>
            <person name="Glavina del Rio T."/>
            <person name="Hammon N."/>
            <person name="Israni S."/>
            <person name="Dalin E."/>
            <person name="Tice H."/>
            <person name="Pitluck S."/>
            <person name="Saunders E."/>
            <person name="Brettin T."/>
            <person name="Bruce D."/>
            <person name="Han C."/>
            <person name="Tapia R."/>
            <person name="Gilna P."/>
            <person name="Schmutz J."/>
            <person name="Larimer F."/>
            <person name="Land M."/>
            <person name="Hauser L."/>
            <person name="Kyrpides N."/>
            <person name="Kim E."/>
            <person name="Karls A.C."/>
            <person name="Bartlett D."/>
            <person name="Higgins B.P."/>
            <person name="Richardson P."/>
        </authorList>
    </citation>
    <scope>NUCLEOTIDE SEQUENCE [LARGE SCALE GENOMIC DNA]</scope>
    <source>
        <strain>T6c / ATCC BAA-1087</strain>
    </source>
</reference>
<gene>
    <name evidence="1" type="primary">argG</name>
    <name type="ordered locus">Patl_0979</name>
</gene>
<keyword id="KW-0028">Amino-acid biosynthesis</keyword>
<keyword id="KW-0055">Arginine biosynthesis</keyword>
<keyword id="KW-0067">ATP-binding</keyword>
<keyword id="KW-0963">Cytoplasm</keyword>
<keyword id="KW-0436">Ligase</keyword>
<keyword id="KW-0547">Nucleotide-binding</keyword>
<feature type="chain" id="PRO_0000263952" description="Argininosuccinate synthase">
    <location>
        <begin position="1"/>
        <end position="412"/>
    </location>
</feature>
<feature type="binding site" evidence="1">
    <location>
        <begin position="12"/>
        <end position="20"/>
    </location>
    <ligand>
        <name>ATP</name>
        <dbReference type="ChEBI" id="CHEBI:30616"/>
    </ligand>
</feature>
<feature type="binding site" evidence="1">
    <location>
        <position position="39"/>
    </location>
    <ligand>
        <name>ATP</name>
        <dbReference type="ChEBI" id="CHEBI:30616"/>
    </ligand>
</feature>
<feature type="binding site" evidence="1">
    <location>
        <position position="91"/>
    </location>
    <ligand>
        <name>L-citrulline</name>
        <dbReference type="ChEBI" id="CHEBI:57743"/>
    </ligand>
</feature>
<feature type="binding site" evidence="1">
    <location>
        <position position="96"/>
    </location>
    <ligand>
        <name>L-citrulline</name>
        <dbReference type="ChEBI" id="CHEBI:57743"/>
    </ligand>
</feature>
<feature type="binding site" evidence="1">
    <location>
        <position position="121"/>
    </location>
    <ligand>
        <name>ATP</name>
        <dbReference type="ChEBI" id="CHEBI:30616"/>
    </ligand>
</feature>
<feature type="binding site" evidence="1">
    <location>
        <position position="123"/>
    </location>
    <ligand>
        <name>L-aspartate</name>
        <dbReference type="ChEBI" id="CHEBI:29991"/>
    </ligand>
</feature>
<feature type="binding site" evidence="1">
    <location>
        <position position="127"/>
    </location>
    <ligand>
        <name>L-aspartate</name>
        <dbReference type="ChEBI" id="CHEBI:29991"/>
    </ligand>
</feature>
<feature type="binding site" evidence="1">
    <location>
        <position position="127"/>
    </location>
    <ligand>
        <name>L-citrulline</name>
        <dbReference type="ChEBI" id="CHEBI:57743"/>
    </ligand>
</feature>
<feature type="binding site" evidence="1">
    <location>
        <position position="128"/>
    </location>
    <ligand>
        <name>L-aspartate</name>
        <dbReference type="ChEBI" id="CHEBI:29991"/>
    </ligand>
</feature>
<feature type="binding site" evidence="1">
    <location>
        <position position="131"/>
    </location>
    <ligand>
        <name>L-citrulline</name>
        <dbReference type="ChEBI" id="CHEBI:57743"/>
    </ligand>
</feature>
<feature type="binding site" evidence="1">
    <location>
        <position position="180"/>
    </location>
    <ligand>
        <name>L-citrulline</name>
        <dbReference type="ChEBI" id="CHEBI:57743"/>
    </ligand>
</feature>
<feature type="binding site" evidence="1">
    <location>
        <position position="189"/>
    </location>
    <ligand>
        <name>L-citrulline</name>
        <dbReference type="ChEBI" id="CHEBI:57743"/>
    </ligand>
</feature>
<feature type="binding site" evidence="1">
    <location>
        <position position="265"/>
    </location>
    <ligand>
        <name>L-citrulline</name>
        <dbReference type="ChEBI" id="CHEBI:57743"/>
    </ligand>
</feature>
<feature type="binding site" evidence="1">
    <location>
        <position position="277"/>
    </location>
    <ligand>
        <name>L-citrulline</name>
        <dbReference type="ChEBI" id="CHEBI:57743"/>
    </ligand>
</feature>
<evidence type="ECO:0000255" key="1">
    <source>
        <dbReference type="HAMAP-Rule" id="MF_00005"/>
    </source>
</evidence>
<accession>Q15X83</accession>
<comment type="catalytic activity">
    <reaction evidence="1">
        <text>L-citrulline + L-aspartate + ATP = 2-(N(omega)-L-arginino)succinate + AMP + diphosphate + H(+)</text>
        <dbReference type="Rhea" id="RHEA:10932"/>
        <dbReference type="ChEBI" id="CHEBI:15378"/>
        <dbReference type="ChEBI" id="CHEBI:29991"/>
        <dbReference type="ChEBI" id="CHEBI:30616"/>
        <dbReference type="ChEBI" id="CHEBI:33019"/>
        <dbReference type="ChEBI" id="CHEBI:57472"/>
        <dbReference type="ChEBI" id="CHEBI:57743"/>
        <dbReference type="ChEBI" id="CHEBI:456215"/>
        <dbReference type="EC" id="6.3.4.5"/>
    </reaction>
</comment>
<comment type="pathway">
    <text evidence="1">Amino-acid biosynthesis; L-arginine biosynthesis; L-arginine from L-ornithine and carbamoyl phosphate: step 2/3.</text>
</comment>
<comment type="subunit">
    <text evidence="1">Homotetramer.</text>
</comment>
<comment type="subcellular location">
    <subcellularLocation>
        <location evidence="1">Cytoplasm</location>
    </subcellularLocation>
</comment>
<comment type="similarity">
    <text evidence="1">Belongs to the argininosuccinate synthase family. Type 1 subfamily.</text>
</comment>
<sequence length="412" mass="45327">MSKKNIKKVVLAYSGGLDTSAIIPWLKENYDCEVIAFAADVGQGDEELEGLREKAIKTGASECYIVDLKDEFVSDYIYPTITTGAVYEGQYLLGTSMARPIIAKAQVEIARKVGADALCHGCTGKGNDQVRFEGTFAALAPELTVIAPWREWDMVSREDLLAYLAERDIKTTASATKIYSRDANAWHISHEGGELEDPWCEPTKEVWTMTVSPEDAPNTPERVEVSFEHGRMVKVNGEALSPYQCLVKLNELAGAHGVGRIDIVENRLVGMKSRGCYETPGGTVMLAAYKALESLVLDKAALKYREQIGLEFSHVMYDGRWFTPLNDALLAGAASFADKVTGDIVVKLYKGQATVTQRRSPNSLYSEDFATFGADDVYDQSHAEGFIRLYSLSSRISALNKEGIPFKNTGIE</sequence>
<name>ASSY_PSEA6</name>
<proteinExistence type="inferred from homology"/>
<dbReference type="EC" id="6.3.4.5" evidence="1"/>
<dbReference type="EMBL" id="CP000388">
    <property type="protein sequence ID" value="ABG39505.1"/>
    <property type="molecule type" value="Genomic_DNA"/>
</dbReference>
<dbReference type="RefSeq" id="WP_011573862.1">
    <property type="nucleotide sequence ID" value="NC_008228.1"/>
</dbReference>
<dbReference type="SMR" id="Q15X83"/>
<dbReference type="STRING" id="342610.Patl_0979"/>
<dbReference type="KEGG" id="pat:Patl_0979"/>
<dbReference type="eggNOG" id="COG0137">
    <property type="taxonomic scope" value="Bacteria"/>
</dbReference>
<dbReference type="HOGENOM" id="CLU_032784_4_2_6"/>
<dbReference type="OrthoDB" id="9801641at2"/>
<dbReference type="UniPathway" id="UPA00068">
    <property type="reaction ID" value="UER00113"/>
</dbReference>
<dbReference type="Proteomes" id="UP000001981">
    <property type="component" value="Chromosome"/>
</dbReference>
<dbReference type="GO" id="GO:0005737">
    <property type="term" value="C:cytoplasm"/>
    <property type="evidence" value="ECO:0007669"/>
    <property type="project" value="UniProtKB-SubCell"/>
</dbReference>
<dbReference type="GO" id="GO:0004055">
    <property type="term" value="F:argininosuccinate synthase activity"/>
    <property type="evidence" value="ECO:0007669"/>
    <property type="project" value="UniProtKB-UniRule"/>
</dbReference>
<dbReference type="GO" id="GO:0005524">
    <property type="term" value="F:ATP binding"/>
    <property type="evidence" value="ECO:0007669"/>
    <property type="project" value="UniProtKB-UniRule"/>
</dbReference>
<dbReference type="GO" id="GO:0000053">
    <property type="term" value="P:argininosuccinate metabolic process"/>
    <property type="evidence" value="ECO:0007669"/>
    <property type="project" value="TreeGrafter"/>
</dbReference>
<dbReference type="GO" id="GO:0006526">
    <property type="term" value="P:L-arginine biosynthetic process"/>
    <property type="evidence" value="ECO:0007669"/>
    <property type="project" value="UniProtKB-UniRule"/>
</dbReference>
<dbReference type="GO" id="GO:0000050">
    <property type="term" value="P:urea cycle"/>
    <property type="evidence" value="ECO:0007669"/>
    <property type="project" value="TreeGrafter"/>
</dbReference>
<dbReference type="CDD" id="cd01999">
    <property type="entry name" value="ASS"/>
    <property type="match status" value="1"/>
</dbReference>
<dbReference type="FunFam" id="3.40.50.620:FF:000019">
    <property type="entry name" value="Argininosuccinate synthase"/>
    <property type="match status" value="1"/>
</dbReference>
<dbReference type="FunFam" id="3.90.1260.10:FF:000007">
    <property type="entry name" value="Argininosuccinate synthase"/>
    <property type="match status" value="1"/>
</dbReference>
<dbReference type="Gene3D" id="3.90.1260.10">
    <property type="entry name" value="Argininosuccinate synthetase, chain A, domain 2"/>
    <property type="match status" value="1"/>
</dbReference>
<dbReference type="Gene3D" id="3.40.50.620">
    <property type="entry name" value="HUPs"/>
    <property type="match status" value="1"/>
</dbReference>
<dbReference type="Gene3D" id="1.20.5.470">
    <property type="entry name" value="Single helix bin"/>
    <property type="match status" value="1"/>
</dbReference>
<dbReference type="HAMAP" id="MF_00005">
    <property type="entry name" value="Arg_succ_synth_type1"/>
    <property type="match status" value="1"/>
</dbReference>
<dbReference type="InterPro" id="IPR048268">
    <property type="entry name" value="Arginosuc_syn_C"/>
</dbReference>
<dbReference type="InterPro" id="IPR048267">
    <property type="entry name" value="Arginosuc_syn_N"/>
</dbReference>
<dbReference type="InterPro" id="IPR001518">
    <property type="entry name" value="Arginosuc_synth"/>
</dbReference>
<dbReference type="InterPro" id="IPR018223">
    <property type="entry name" value="Arginosuc_synth_CS"/>
</dbReference>
<dbReference type="InterPro" id="IPR023434">
    <property type="entry name" value="Arginosuc_synth_type_1_subfam"/>
</dbReference>
<dbReference type="InterPro" id="IPR024074">
    <property type="entry name" value="AS_cat/multimer_dom_body"/>
</dbReference>
<dbReference type="InterPro" id="IPR014729">
    <property type="entry name" value="Rossmann-like_a/b/a_fold"/>
</dbReference>
<dbReference type="NCBIfam" id="TIGR00032">
    <property type="entry name" value="argG"/>
    <property type="match status" value="1"/>
</dbReference>
<dbReference type="NCBIfam" id="NF001770">
    <property type="entry name" value="PRK00509.1"/>
    <property type="match status" value="1"/>
</dbReference>
<dbReference type="PANTHER" id="PTHR11587">
    <property type="entry name" value="ARGININOSUCCINATE SYNTHASE"/>
    <property type="match status" value="1"/>
</dbReference>
<dbReference type="PANTHER" id="PTHR11587:SF2">
    <property type="entry name" value="ARGININOSUCCINATE SYNTHASE"/>
    <property type="match status" value="1"/>
</dbReference>
<dbReference type="Pfam" id="PF20979">
    <property type="entry name" value="Arginosuc_syn_C"/>
    <property type="match status" value="1"/>
</dbReference>
<dbReference type="Pfam" id="PF00764">
    <property type="entry name" value="Arginosuc_synth"/>
    <property type="match status" value="1"/>
</dbReference>
<dbReference type="SUPFAM" id="SSF52402">
    <property type="entry name" value="Adenine nucleotide alpha hydrolases-like"/>
    <property type="match status" value="1"/>
</dbReference>
<dbReference type="SUPFAM" id="SSF69864">
    <property type="entry name" value="Argininosuccinate synthetase, C-terminal domain"/>
    <property type="match status" value="1"/>
</dbReference>
<dbReference type="PROSITE" id="PS00564">
    <property type="entry name" value="ARGININOSUCCIN_SYN_1"/>
    <property type="match status" value="1"/>
</dbReference>
<dbReference type="PROSITE" id="PS00565">
    <property type="entry name" value="ARGININOSUCCIN_SYN_2"/>
    <property type="match status" value="1"/>
</dbReference>
<protein>
    <recommendedName>
        <fullName evidence="1">Argininosuccinate synthase</fullName>
        <ecNumber evidence="1">6.3.4.5</ecNumber>
    </recommendedName>
    <alternativeName>
        <fullName evidence="1">Citrulline--aspartate ligase</fullName>
    </alternativeName>
</protein>